<sequence length="298" mass="31983">MRIAILSQGPQLYSTKRLVEAALARGHEVKVINPLKCYMNINMTKPSIHMAGKDLGHFDAVIPRIGASVTFYGSAVLRQFEMMGVYAVNGSIGIARSRDKLRSMQLLSRQGIGLPITGFANKPSDIPDLIDMVGGAPLVVKLLEGTQGIGVVLAETRKAAESVLEAFMGLKANIMVQEYIAEAQGADIRCFVLGDKVIAAMKRQAKPGEFRSNLHRGGSATLVKLTPEERSVALRAAKTMGLNIAGVDLLRSNHGPVVMEVNSSPGLEGIEKATQKDVADAIICFMEKNANKSIKSAQ</sequence>
<accession>Q080Q2</accession>
<proteinExistence type="inferred from homology"/>
<gene>
    <name evidence="1" type="primary">rimK2</name>
    <name type="ordered locus">Sfri_2418</name>
</gene>
<comment type="cofactor">
    <cofactor evidence="1">
        <name>Mg(2+)</name>
        <dbReference type="ChEBI" id="CHEBI:18420"/>
    </cofactor>
    <cofactor evidence="1">
        <name>Mn(2+)</name>
        <dbReference type="ChEBI" id="CHEBI:29035"/>
    </cofactor>
    <text evidence="1">Binds 2 magnesium or manganese ions per subunit.</text>
</comment>
<comment type="similarity">
    <text evidence="1">Belongs to the RimK family.</text>
</comment>
<name>RIMK2_SHEFN</name>
<reference key="1">
    <citation type="submission" date="2006-08" db="EMBL/GenBank/DDBJ databases">
        <title>Complete sequence of Shewanella frigidimarina NCIMB 400.</title>
        <authorList>
            <consortium name="US DOE Joint Genome Institute"/>
            <person name="Copeland A."/>
            <person name="Lucas S."/>
            <person name="Lapidus A."/>
            <person name="Barry K."/>
            <person name="Detter J.C."/>
            <person name="Glavina del Rio T."/>
            <person name="Hammon N."/>
            <person name="Israni S."/>
            <person name="Dalin E."/>
            <person name="Tice H."/>
            <person name="Pitluck S."/>
            <person name="Fredrickson J.K."/>
            <person name="Kolker E."/>
            <person name="McCuel L.A."/>
            <person name="DiChristina T."/>
            <person name="Nealson K.H."/>
            <person name="Newman D."/>
            <person name="Tiedje J.M."/>
            <person name="Zhou J."/>
            <person name="Romine M.F."/>
            <person name="Culley D.E."/>
            <person name="Serres M."/>
            <person name="Chertkov O."/>
            <person name="Brettin T."/>
            <person name="Bruce D."/>
            <person name="Han C."/>
            <person name="Tapia R."/>
            <person name="Gilna P."/>
            <person name="Schmutz J."/>
            <person name="Larimer F."/>
            <person name="Land M."/>
            <person name="Hauser L."/>
            <person name="Kyrpides N."/>
            <person name="Mikhailova N."/>
            <person name="Richardson P."/>
        </authorList>
    </citation>
    <scope>NUCLEOTIDE SEQUENCE [LARGE SCALE GENOMIC DNA]</scope>
    <source>
        <strain>NCIMB 400</strain>
    </source>
</reference>
<protein>
    <recommendedName>
        <fullName evidence="1">Probable alpha-L-glutamate ligase 2</fullName>
        <ecNumber evidence="1">6.3.2.-</ecNumber>
    </recommendedName>
</protein>
<keyword id="KW-0067">ATP-binding</keyword>
<keyword id="KW-0436">Ligase</keyword>
<keyword id="KW-0460">Magnesium</keyword>
<keyword id="KW-0464">Manganese</keyword>
<keyword id="KW-0479">Metal-binding</keyword>
<keyword id="KW-0547">Nucleotide-binding</keyword>
<keyword id="KW-0648">Protein biosynthesis</keyword>
<keyword id="KW-1185">Reference proteome</keyword>
<organism>
    <name type="scientific">Shewanella frigidimarina (strain NCIMB 400)</name>
    <dbReference type="NCBI Taxonomy" id="318167"/>
    <lineage>
        <taxon>Bacteria</taxon>
        <taxon>Pseudomonadati</taxon>
        <taxon>Pseudomonadota</taxon>
        <taxon>Gammaproteobacteria</taxon>
        <taxon>Alteromonadales</taxon>
        <taxon>Shewanellaceae</taxon>
        <taxon>Shewanella</taxon>
    </lineage>
</organism>
<evidence type="ECO:0000255" key="1">
    <source>
        <dbReference type="HAMAP-Rule" id="MF_01552"/>
    </source>
</evidence>
<dbReference type="EC" id="6.3.2.-" evidence="1"/>
<dbReference type="EMBL" id="CP000447">
    <property type="protein sequence ID" value="ABI72263.1"/>
    <property type="molecule type" value="Genomic_DNA"/>
</dbReference>
<dbReference type="SMR" id="Q080Q2"/>
<dbReference type="STRING" id="318167.Sfri_2418"/>
<dbReference type="KEGG" id="sfr:Sfri_2418"/>
<dbReference type="eggNOG" id="COG0189">
    <property type="taxonomic scope" value="Bacteria"/>
</dbReference>
<dbReference type="HOGENOM" id="CLU_054353_0_1_6"/>
<dbReference type="OrthoDB" id="3865600at2"/>
<dbReference type="Proteomes" id="UP000000684">
    <property type="component" value="Chromosome"/>
</dbReference>
<dbReference type="GO" id="GO:0005737">
    <property type="term" value="C:cytoplasm"/>
    <property type="evidence" value="ECO:0007669"/>
    <property type="project" value="TreeGrafter"/>
</dbReference>
<dbReference type="GO" id="GO:0005524">
    <property type="term" value="F:ATP binding"/>
    <property type="evidence" value="ECO:0007669"/>
    <property type="project" value="UniProtKB-UniRule"/>
</dbReference>
<dbReference type="GO" id="GO:0046872">
    <property type="term" value="F:metal ion binding"/>
    <property type="evidence" value="ECO:0007669"/>
    <property type="project" value="UniProtKB-KW"/>
</dbReference>
<dbReference type="GO" id="GO:0018169">
    <property type="term" value="F:ribosomal S6-glutamic acid ligase activity"/>
    <property type="evidence" value="ECO:0007669"/>
    <property type="project" value="TreeGrafter"/>
</dbReference>
<dbReference type="GO" id="GO:0036211">
    <property type="term" value="P:protein modification process"/>
    <property type="evidence" value="ECO:0007669"/>
    <property type="project" value="InterPro"/>
</dbReference>
<dbReference type="GO" id="GO:0009432">
    <property type="term" value="P:SOS response"/>
    <property type="evidence" value="ECO:0007669"/>
    <property type="project" value="TreeGrafter"/>
</dbReference>
<dbReference type="GO" id="GO:0006412">
    <property type="term" value="P:translation"/>
    <property type="evidence" value="ECO:0007669"/>
    <property type="project" value="UniProtKB-KW"/>
</dbReference>
<dbReference type="FunFam" id="3.40.50.20:FF:000004">
    <property type="entry name" value="Probable alpha-L-glutamate ligase"/>
    <property type="match status" value="1"/>
</dbReference>
<dbReference type="FunFam" id="3.30.1490.20:FF:000005">
    <property type="entry name" value="Probable alpha-L-glutamate ligase 1"/>
    <property type="match status" value="1"/>
</dbReference>
<dbReference type="FunFam" id="3.30.470.20:FF:000016">
    <property type="entry name" value="Ribosomal protein S6--L-glutamate ligase"/>
    <property type="match status" value="1"/>
</dbReference>
<dbReference type="Gene3D" id="3.40.50.20">
    <property type="match status" value="1"/>
</dbReference>
<dbReference type="Gene3D" id="3.30.1490.20">
    <property type="entry name" value="ATP-grasp fold, A domain"/>
    <property type="match status" value="1"/>
</dbReference>
<dbReference type="Gene3D" id="3.30.470.20">
    <property type="entry name" value="ATP-grasp fold, B domain"/>
    <property type="match status" value="1"/>
</dbReference>
<dbReference type="HAMAP" id="MF_01552">
    <property type="entry name" value="RimK"/>
    <property type="match status" value="1"/>
</dbReference>
<dbReference type="InterPro" id="IPR011761">
    <property type="entry name" value="ATP-grasp"/>
</dbReference>
<dbReference type="InterPro" id="IPR013651">
    <property type="entry name" value="ATP-grasp_RimK-type"/>
</dbReference>
<dbReference type="InterPro" id="IPR013815">
    <property type="entry name" value="ATP_grasp_subdomain_1"/>
</dbReference>
<dbReference type="InterPro" id="IPR023533">
    <property type="entry name" value="RimK"/>
</dbReference>
<dbReference type="InterPro" id="IPR041107">
    <property type="entry name" value="Rimk_N"/>
</dbReference>
<dbReference type="InterPro" id="IPR004666">
    <property type="entry name" value="Rp_bS6_RimK/Lys_biosynth_LsyX"/>
</dbReference>
<dbReference type="NCBIfam" id="NF007764">
    <property type="entry name" value="PRK10446.1"/>
    <property type="match status" value="1"/>
</dbReference>
<dbReference type="NCBIfam" id="TIGR00768">
    <property type="entry name" value="rimK_fam"/>
    <property type="match status" value="1"/>
</dbReference>
<dbReference type="PANTHER" id="PTHR21621:SF7">
    <property type="entry name" value="RIBOSOMAL PROTEIN BS6--L-GLUTAMATE LIGASE"/>
    <property type="match status" value="1"/>
</dbReference>
<dbReference type="PANTHER" id="PTHR21621">
    <property type="entry name" value="RIBOSOMAL PROTEIN S6 MODIFICATION PROTEIN"/>
    <property type="match status" value="1"/>
</dbReference>
<dbReference type="Pfam" id="PF08443">
    <property type="entry name" value="RimK"/>
    <property type="match status" value="1"/>
</dbReference>
<dbReference type="Pfam" id="PF18030">
    <property type="entry name" value="Rimk_N"/>
    <property type="match status" value="1"/>
</dbReference>
<dbReference type="SUPFAM" id="SSF56059">
    <property type="entry name" value="Glutathione synthetase ATP-binding domain-like"/>
    <property type="match status" value="1"/>
</dbReference>
<dbReference type="PROSITE" id="PS50975">
    <property type="entry name" value="ATP_GRASP"/>
    <property type="match status" value="1"/>
</dbReference>
<feature type="chain" id="PRO_0000340557" description="Probable alpha-L-glutamate ligase 2">
    <location>
        <begin position="1"/>
        <end position="298"/>
    </location>
</feature>
<feature type="domain" description="ATP-grasp" evidence="1">
    <location>
        <begin position="104"/>
        <end position="287"/>
    </location>
</feature>
<feature type="binding site" evidence="1">
    <location>
        <position position="141"/>
    </location>
    <ligand>
        <name>ATP</name>
        <dbReference type="ChEBI" id="CHEBI:30616"/>
    </ligand>
</feature>
<feature type="binding site" evidence="1">
    <location>
        <begin position="178"/>
        <end position="179"/>
    </location>
    <ligand>
        <name>ATP</name>
        <dbReference type="ChEBI" id="CHEBI:30616"/>
    </ligand>
</feature>
<feature type="binding site" evidence="1">
    <location>
        <position position="187"/>
    </location>
    <ligand>
        <name>ATP</name>
        <dbReference type="ChEBI" id="CHEBI:30616"/>
    </ligand>
</feature>
<feature type="binding site" evidence="1">
    <location>
        <begin position="211"/>
        <end position="213"/>
    </location>
    <ligand>
        <name>ATP</name>
        <dbReference type="ChEBI" id="CHEBI:30616"/>
    </ligand>
</feature>
<feature type="binding site" evidence="1">
    <location>
        <position position="248"/>
    </location>
    <ligand>
        <name>Mg(2+)</name>
        <dbReference type="ChEBI" id="CHEBI:18420"/>
        <label>1</label>
    </ligand>
</feature>
<feature type="binding site" evidence="1">
    <location>
        <position position="248"/>
    </location>
    <ligand>
        <name>Mn(2+)</name>
        <dbReference type="ChEBI" id="CHEBI:29035"/>
        <label>1</label>
    </ligand>
</feature>
<feature type="binding site" evidence="1">
    <location>
        <position position="260"/>
    </location>
    <ligand>
        <name>Mg(2+)</name>
        <dbReference type="ChEBI" id="CHEBI:18420"/>
        <label>1</label>
    </ligand>
</feature>
<feature type="binding site" evidence="1">
    <location>
        <position position="260"/>
    </location>
    <ligand>
        <name>Mg(2+)</name>
        <dbReference type="ChEBI" id="CHEBI:18420"/>
        <label>2</label>
    </ligand>
</feature>
<feature type="binding site" evidence="1">
    <location>
        <position position="260"/>
    </location>
    <ligand>
        <name>Mn(2+)</name>
        <dbReference type="ChEBI" id="CHEBI:29035"/>
        <label>1</label>
    </ligand>
</feature>
<feature type="binding site" evidence="1">
    <location>
        <position position="260"/>
    </location>
    <ligand>
        <name>Mn(2+)</name>
        <dbReference type="ChEBI" id="CHEBI:29035"/>
        <label>2</label>
    </ligand>
</feature>
<feature type="binding site" evidence="1">
    <location>
        <position position="262"/>
    </location>
    <ligand>
        <name>Mg(2+)</name>
        <dbReference type="ChEBI" id="CHEBI:18420"/>
        <label>2</label>
    </ligand>
</feature>
<feature type="binding site" evidence="1">
    <location>
        <position position="262"/>
    </location>
    <ligand>
        <name>Mn(2+)</name>
        <dbReference type="ChEBI" id="CHEBI:29035"/>
        <label>2</label>
    </ligand>
</feature>